<gene>
    <name evidence="1" type="primary">gatB</name>
    <name type="ordered locus">SAR11_1076</name>
</gene>
<name>GATB_PELUB</name>
<comment type="function">
    <text evidence="1">Allows the formation of correctly charged Asn-tRNA(Asn) or Gln-tRNA(Gln) through the transamidation of misacylated Asp-tRNA(Asn) or Glu-tRNA(Gln) in organisms which lack either or both of asparaginyl-tRNA or glutaminyl-tRNA synthetases. The reaction takes place in the presence of glutamine and ATP through an activated phospho-Asp-tRNA(Asn) or phospho-Glu-tRNA(Gln).</text>
</comment>
<comment type="catalytic activity">
    <reaction evidence="1">
        <text>L-glutamyl-tRNA(Gln) + L-glutamine + ATP + H2O = L-glutaminyl-tRNA(Gln) + L-glutamate + ADP + phosphate + H(+)</text>
        <dbReference type="Rhea" id="RHEA:17521"/>
        <dbReference type="Rhea" id="RHEA-COMP:9681"/>
        <dbReference type="Rhea" id="RHEA-COMP:9684"/>
        <dbReference type="ChEBI" id="CHEBI:15377"/>
        <dbReference type="ChEBI" id="CHEBI:15378"/>
        <dbReference type="ChEBI" id="CHEBI:29985"/>
        <dbReference type="ChEBI" id="CHEBI:30616"/>
        <dbReference type="ChEBI" id="CHEBI:43474"/>
        <dbReference type="ChEBI" id="CHEBI:58359"/>
        <dbReference type="ChEBI" id="CHEBI:78520"/>
        <dbReference type="ChEBI" id="CHEBI:78521"/>
        <dbReference type="ChEBI" id="CHEBI:456216"/>
    </reaction>
</comment>
<comment type="catalytic activity">
    <reaction evidence="1">
        <text>L-aspartyl-tRNA(Asn) + L-glutamine + ATP + H2O = L-asparaginyl-tRNA(Asn) + L-glutamate + ADP + phosphate + 2 H(+)</text>
        <dbReference type="Rhea" id="RHEA:14513"/>
        <dbReference type="Rhea" id="RHEA-COMP:9674"/>
        <dbReference type="Rhea" id="RHEA-COMP:9677"/>
        <dbReference type="ChEBI" id="CHEBI:15377"/>
        <dbReference type="ChEBI" id="CHEBI:15378"/>
        <dbReference type="ChEBI" id="CHEBI:29985"/>
        <dbReference type="ChEBI" id="CHEBI:30616"/>
        <dbReference type="ChEBI" id="CHEBI:43474"/>
        <dbReference type="ChEBI" id="CHEBI:58359"/>
        <dbReference type="ChEBI" id="CHEBI:78515"/>
        <dbReference type="ChEBI" id="CHEBI:78516"/>
        <dbReference type="ChEBI" id="CHEBI:456216"/>
    </reaction>
</comment>
<comment type="subunit">
    <text evidence="1">Heterotrimer of A, B and C subunits.</text>
</comment>
<comment type="similarity">
    <text evidence="1">Belongs to the GatB/GatE family. GatB subfamily.</text>
</comment>
<dbReference type="EC" id="6.3.5.-" evidence="1"/>
<dbReference type="EMBL" id="CP000084">
    <property type="protein sequence ID" value="AAZ21880.1"/>
    <property type="molecule type" value="Genomic_DNA"/>
</dbReference>
<dbReference type="RefSeq" id="WP_011282144.1">
    <property type="nucleotide sequence ID" value="NC_007205.1"/>
</dbReference>
<dbReference type="SMR" id="Q4FLQ8"/>
<dbReference type="STRING" id="335992.SAR11_1076"/>
<dbReference type="GeneID" id="66295566"/>
<dbReference type="KEGG" id="pub:SAR11_1076"/>
<dbReference type="eggNOG" id="COG0064">
    <property type="taxonomic scope" value="Bacteria"/>
</dbReference>
<dbReference type="HOGENOM" id="CLU_019240_0_0_5"/>
<dbReference type="OrthoDB" id="9804078at2"/>
<dbReference type="Proteomes" id="UP000002528">
    <property type="component" value="Chromosome"/>
</dbReference>
<dbReference type="GO" id="GO:0050566">
    <property type="term" value="F:asparaginyl-tRNA synthase (glutamine-hydrolyzing) activity"/>
    <property type="evidence" value="ECO:0007669"/>
    <property type="project" value="RHEA"/>
</dbReference>
<dbReference type="GO" id="GO:0005524">
    <property type="term" value="F:ATP binding"/>
    <property type="evidence" value="ECO:0007669"/>
    <property type="project" value="UniProtKB-KW"/>
</dbReference>
<dbReference type="GO" id="GO:0050567">
    <property type="term" value="F:glutaminyl-tRNA synthase (glutamine-hydrolyzing) activity"/>
    <property type="evidence" value="ECO:0007669"/>
    <property type="project" value="UniProtKB-UniRule"/>
</dbReference>
<dbReference type="GO" id="GO:0070681">
    <property type="term" value="P:glutaminyl-tRNAGln biosynthesis via transamidation"/>
    <property type="evidence" value="ECO:0007669"/>
    <property type="project" value="TreeGrafter"/>
</dbReference>
<dbReference type="GO" id="GO:0006412">
    <property type="term" value="P:translation"/>
    <property type="evidence" value="ECO:0007669"/>
    <property type="project" value="UniProtKB-UniRule"/>
</dbReference>
<dbReference type="FunFam" id="1.10.10.410:FF:000001">
    <property type="entry name" value="Aspartyl/glutamyl-tRNA(Asn/Gln) amidotransferase subunit B"/>
    <property type="match status" value="1"/>
</dbReference>
<dbReference type="FunFam" id="1.10.150.380:FF:000001">
    <property type="entry name" value="Aspartyl/glutamyl-tRNA(Asn/Gln) amidotransferase subunit B"/>
    <property type="match status" value="1"/>
</dbReference>
<dbReference type="Gene3D" id="1.10.10.410">
    <property type="match status" value="1"/>
</dbReference>
<dbReference type="Gene3D" id="1.10.150.380">
    <property type="entry name" value="GatB domain, N-terminal subdomain"/>
    <property type="match status" value="1"/>
</dbReference>
<dbReference type="HAMAP" id="MF_00121">
    <property type="entry name" value="GatB"/>
    <property type="match status" value="1"/>
</dbReference>
<dbReference type="InterPro" id="IPR017959">
    <property type="entry name" value="Asn/Gln-tRNA_amidoTrfase_suB/E"/>
</dbReference>
<dbReference type="InterPro" id="IPR006075">
    <property type="entry name" value="Asn/Gln-tRNA_Trfase_suB/E_cat"/>
</dbReference>
<dbReference type="InterPro" id="IPR018027">
    <property type="entry name" value="Asn/Gln_amidotransferase"/>
</dbReference>
<dbReference type="InterPro" id="IPR003789">
    <property type="entry name" value="Asn/Gln_tRNA_amidoTrase-B-like"/>
</dbReference>
<dbReference type="InterPro" id="IPR004413">
    <property type="entry name" value="GatB"/>
</dbReference>
<dbReference type="InterPro" id="IPR042114">
    <property type="entry name" value="GatB_C_1"/>
</dbReference>
<dbReference type="InterPro" id="IPR023168">
    <property type="entry name" value="GatB_Yqey_C_2"/>
</dbReference>
<dbReference type="InterPro" id="IPR017958">
    <property type="entry name" value="Gln-tRNA_amidoTrfase_suB_CS"/>
</dbReference>
<dbReference type="InterPro" id="IPR014746">
    <property type="entry name" value="Gln_synth/guanido_kin_cat_dom"/>
</dbReference>
<dbReference type="NCBIfam" id="TIGR00133">
    <property type="entry name" value="gatB"/>
    <property type="match status" value="1"/>
</dbReference>
<dbReference type="NCBIfam" id="NF004012">
    <property type="entry name" value="PRK05477.1-2"/>
    <property type="match status" value="1"/>
</dbReference>
<dbReference type="NCBIfam" id="NF004014">
    <property type="entry name" value="PRK05477.1-4"/>
    <property type="match status" value="1"/>
</dbReference>
<dbReference type="NCBIfam" id="NF004015">
    <property type="entry name" value="PRK05477.1-5"/>
    <property type="match status" value="1"/>
</dbReference>
<dbReference type="PANTHER" id="PTHR11659">
    <property type="entry name" value="GLUTAMYL-TRNA GLN AMIDOTRANSFERASE SUBUNIT B MITOCHONDRIAL AND PROKARYOTIC PET112-RELATED"/>
    <property type="match status" value="1"/>
</dbReference>
<dbReference type="PANTHER" id="PTHR11659:SF0">
    <property type="entry name" value="GLUTAMYL-TRNA(GLN) AMIDOTRANSFERASE SUBUNIT B, MITOCHONDRIAL"/>
    <property type="match status" value="1"/>
</dbReference>
<dbReference type="Pfam" id="PF02934">
    <property type="entry name" value="GatB_N"/>
    <property type="match status" value="1"/>
</dbReference>
<dbReference type="Pfam" id="PF02637">
    <property type="entry name" value="GatB_Yqey"/>
    <property type="match status" value="1"/>
</dbReference>
<dbReference type="SMART" id="SM00845">
    <property type="entry name" value="GatB_Yqey"/>
    <property type="match status" value="1"/>
</dbReference>
<dbReference type="SUPFAM" id="SSF89095">
    <property type="entry name" value="GatB/YqeY motif"/>
    <property type="match status" value="1"/>
</dbReference>
<dbReference type="SUPFAM" id="SSF55931">
    <property type="entry name" value="Glutamine synthetase/guanido kinase"/>
    <property type="match status" value="1"/>
</dbReference>
<dbReference type="PROSITE" id="PS01234">
    <property type="entry name" value="GATB"/>
    <property type="match status" value="1"/>
</dbReference>
<evidence type="ECO:0000255" key="1">
    <source>
        <dbReference type="HAMAP-Rule" id="MF_00121"/>
    </source>
</evidence>
<proteinExistence type="inferred from homology"/>
<feature type="chain" id="PRO_0000241251" description="Aspartyl/glutamyl-tRNA(Asn/Gln) amidotransferase subunit B">
    <location>
        <begin position="1"/>
        <end position="492"/>
    </location>
</feature>
<protein>
    <recommendedName>
        <fullName evidence="1">Aspartyl/glutamyl-tRNA(Asn/Gln) amidotransferase subunit B</fullName>
        <shortName evidence="1">Asp/Glu-ADT subunit B</shortName>
        <ecNumber evidence="1">6.3.5.-</ecNumber>
    </recommendedName>
</protein>
<organism>
    <name type="scientific">Pelagibacter ubique (strain HTCC1062)</name>
    <dbReference type="NCBI Taxonomy" id="335992"/>
    <lineage>
        <taxon>Bacteria</taxon>
        <taxon>Pseudomonadati</taxon>
        <taxon>Pseudomonadota</taxon>
        <taxon>Alphaproteobacteria</taxon>
        <taxon>Candidatus Pelagibacterales</taxon>
        <taxon>Candidatus Pelagibacteraceae</taxon>
        <taxon>Candidatus Pelagibacter</taxon>
    </lineage>
</organism>
<keyword id="KW-0067">ATP-binding</keyword>
<keyword id="KW-0436">Ligase</keyword>
<keyword id="KW-0547">Nucleotide-binding</keyword>
<keyword id="KW-0648">Protein biosynthesis</keyword>
<keyword id="KW-1185">Reference proteome</keyword>
<reference key="1">
    <citation type="journal article" date="2005" name="Science">
        <title>Genome streamlining in a cosmopolitan oceanic bacterium.</title>
        <authorList>
            <person name="Giovannoni S.J."/>
            <person name="Tripp H.J."/>
            <person name="Givan S."/>
            <person name="Podar M."/>
            <person name="Vergin K.L."/>
            <person name="Baptista D."/>
            <person name="Bibbs L."/>
            <person name="Eads J."/>
            <person name="Richardson T.H."/>
            <person name="Noordewier M."/>
            <person name="Rappe M.S."/>
            <person name="Short J.M."/>
            <person name="Carrington J.C."/>
            <person name="Mathur E.J."/>
        </authorList>
    </citation>
    <scope>NUCLEOTIDE SEQUENCE [LARGE SCALE GENOMIC DNA]</scope>
    <source>
        <strain>HTCC1062</strain>
    </source>
</reference>
<sequence length="492" mass="55487">MTKDNSEYLIERRDNVYEVVIGLEVHAQVTSNSKLFSSSSTTFGAEPNTQVSLVDAAFPGMLPVINEYCVKQAIKTGIGLRAQINKRSVFDRKNYFYADLPQGYQISQFKYPIVGEGTVILDMAHGQKEVGIERLHLEQDAGKSIHDMDPQNTLVDLNRSGVALMEIVSKPDMRTPDEVSAYIKKLRSIMRYLGTCDGNMQEGSLRADVNISVRIKGSDKLGTRCEIKNVNSIKFMQMAIDYEANRQVDLIEDGKTIDQETRLFDTKKNETRSMRSKEDAHDYRYFPDPDLLPLEVTDEFIEKLKADIPELPDDKKKRFIDEFKVSAYEATILVSDIETAKYFEEVVAKMGKNKDMKLAVNWITGELFAVLNNKNLEISESPVSAKNLAKLINLIKNGTISGKIAKTIFELMIDGDIDPQIIVEEKGLKQESDPKALEALIDKIIDTNREKAIEYKNGKEKLFGFFVGQAMKVSGGKANPQLINEILKKKLQ</sequence>
<accession>Q4FLQ8</accession>